<keyword id="KW-0068">Autocatalytic cleavage</keyword>
<keyword id="KW-0963">Cytoplasm</keyword>
<keyword id="KW-0210">Decarboxylase</keyword>
<keyword id="KW-0456">Lyase</keyword>
<keyword id="KW-0566">Pantothenate biosynthesis</keyword>
<keyword id="KW-0670">Pyruvate</keyword>
<keyword id="KW-1185">Reference proteome</keyword>
<keyword id="KW-0704">Schiff base</keyword>
<keyword id="KW-0865">Zymogen</keyword>
<feature type="chain" id="PRO_1000192007" description="Aspartate 1-decarboxylase beta chain" evidence="1">
    <location>
        <begin position="1"/>
        <end position="24"/>
    </location>
</feature>
<feature type="chain" id="PRO_1000192008" description="Aspartate 1-decarboxylase alpha chain" evidence="1">
    <location>
        <begin position="25"/>
        <end position="127"/>
    </location>
</feature>
<feature type="active site" description="Schiff-base intermediate with substrate; via pyruvic acid" evidence="1">
    <location>
        <position position="25"/>
    </location>
</feature>
<feature type="active site" description="Proton donor" evidence="1">
    <location>
        <position position="58"/>
    </location>
</feature>
<feature type="binding site" evidence="1">
    <location>
        <position position="57"/>
    </location>
    <ligand>
        <name>substrate</name>
    </ligand>
</feature>
<feature type="binding site" evidence="1">
    <location>
        <begin position="73"/>
        <end position="75"/>
    </location>
    <ligand>
        <name>substrate</name>
    </ligand>
</feature>
<feature type="modified residue" description="Pyruvic acid (Ser)" evidence="1">
    <location>
        <position position="25"/>
    </location>
</feature>
<organism>
    <name type="scientific">Laribacter hongkongensis (strain HLHK9)</name>
    <dbReference type="NCBI Taxonomy" id="557598"/>
    <lineage>
        <taxon>Bacteria</taxon>
        <taxon>Pseudomonadati</taxon>
        <taxon>Pseudomonadota</taxon>
        <taxon>Betaproteobacteria</taxon>
        <taxon>Neisseriales</taxon>
        <taxon>Aquaspirillaceae</taxon>
        <taxon>Laribacter</taxon>
    </lineage>
</organism>
<gene>
    <name evidence="1" type="primary">panD</name>
    <name type="ordered locus">LHK_01400</name>
</gene>
<name>PAND_LARHH</name>
<accession>C1D7F0</accession>
<protein>
    <recommendedName>
        <fullName evidence="1">Aspartate 1-decarboxylase</fullName>
        <ecNumber evidence="1">4.1.1.11</ecNumber>
    </recommendedName>
    <alternativeName>
        <fullName evidence="1">Aspartate alpha-decarboxylase</fullName>
    </alternativeName>
    <component>
        <recommendedName>
            <fullName evidence="1">Aspartate 1-decarboxylase beta chain</fullName>
        </recommendedName>
    </component>
    <component>
        <recommendedName>
            <fullName evidence="1">Aspartate 1-decarboxylase alpha chain</fullName>
        </recommendedName>
    </component>
</protein>
<comment type="function">
    <text evidence="1">Catalyzes the pyruvoyl-dependent decarboxylation of aspartate to produce beta-alanine.</text>
</comment>
<comment type="catalytic activity">
    <reaction evidence="1">
        <text>L-aspartate + H(+) = beta-alanine + CO2</text>
        <dbReference type="Rhea" id="RHEA:19497"/>
        <dbReference type="ChEBI" id="CHEBI:15378"/>
        <dbReference type="ChEBI" id="CHEBI:16526"/>
        <dbReference type="ChEBI" id="CHEBI:29991"/>
        <dbReference type="ChEBI" id="CHEBI:57966"/>
        <dbReference type="EC" id="4.1.1.11"/>
    </reaction>
</comment>
<comment type="cofactor">
    <cofactor evidence="1">
        <name>pyruvate</name>
        <dbReference type="ChEBI" id="CHEBI:15361"/>
    </cofactor>
    <text evidence="1">Binds 1 pyruvoyl group covalently per subunit.</text>
</comment>
<comment type="pathway">
    <text evidence="1">Cofactor biosynthesis; (R)-pantothenate biosynthesis; beta-alanine from L-aspartate: step 1/1.</text>
</comment>
<comment type="subunit">
    <text evidence="1">Heterooctamer of four alpha and four beta subunits.</text>
</comment>
<comment type="subcellular location">
    <subcellularLocation>
        <location evidence="1">Cytoplasm</location>
    </subcellularLocation>
</comment>
<comment type="PTM">
    <text evidence="1">Is synthesized initially as an inactive proenzyme, which is activated by self-cleavage at a specific serine bond to produce a beta-subunit with a hydroxyl group at its C-terminus and an alpha-subunit with a pyruvoyl group at its N-terminus.</text>
</comment>
<comment type="similarity">
    <text evidence="1">Belongs to the PanD family.</text>
</comment>
<evidence type="ECO:0000255" key="1">
    <source>
        <dbReference type="HAMAP-Rule" id="MF_00446"/>
    </source>
</evidence>
<reference key="1">
    <citation type="journal article" date="2009" name="PLoS Genet.">
        <title>The complete genome and proteome of Laribacter hongkongensis reveal potential mechanisms for adaptations to different temperatures and habitats.</title>
        <authorList>
            <person name="Woo P.C.Y."/>
            <person name="Lau S.K.P."/>
            <person name="Tse H."/>
            <person name="Teng J.L.L."/>
            <person name="Curreem S.O."/>
            <person name="Tsang A.K.L."/>
            <person name="Fan R.Y.Y."/>
            <person name="Wong G.K.M."/>
            <person name="Huang Y."/>
            <person name="Loman N.J."/>
            <person name="Snyder L.A.S."/>
            <person name="Cai J.J."/>
            <person name="Huang J.-D."/>
            <person name="Mak W."/>
            <person name="Pallen M.J."/>
            <person name="Lok S."/>
            <person name="Yuen K.-Y."/>
        </authorList>
    </citation>
    <scope>NUCLEOTIDE SEQUENCE [LARGE SCALE GENOMIC DNA]</scope>
    <source>
        <strain>HLHK9</strain>
    </source>
</reference>
<sequence>MQRTLLKSKLHRVHVTQCELHYIGSCAIDEDLLEAADICEYEEIQIWNVNNGERFATYAIRGERGSGMISVNGSAARRAAVGDILIIATFARFDEQERLEHRPRLVHVDEQNRIIELPAGIPVQAAP</sequence>
<dbReference type="EC" id="4.1.1.11" evidence="1"/>
<dbReference type="EMBL" id="CP001154">
    <property type="protein sequence ID" value="ACO74390.1"/>
    <property type="molecule type" value="Genomic_DNA"/>
</dbReference>
<dbReference type="RefSeq" id="WP_012696876.1">
    <property type="nucleotide sequence ID" value="NC_012559.1"/>
</dbReference>
<dbReference type="SMR" id="C1D7F0"/>
<dbReference type="STRING" id="557598.LHK_01400"/>
<dbReference type="GeneID" id="75109822"/>
<dbReference type="KEGG" id="lhk:LHK_01400"/>
<dbReference type="eggNOG" id="COG0853">
    <property type="taxonomic scope" value="Bacteria"/>
</dbReference>
<dbReference type="HOGENOM" id="CLU_115305_2_1_4"/>
<dbReference type="UniPathway" id="UPA00028">
    <property type="reaction ID" value="UER00002"/>
</dbReference>
<dbReference type="Proteomes" id="UP000002010">
    <property type="component" value="Chromosome"/>
</dbReference>
<dbReference type="GO" id="GO:0005829">
    <property type="term" value="C:cytosol"/>
    <property type="evidence" value="ECO:0007669"/>
    <property type="project" value="TreeGrafter"/>
</dbReference>
<dbReference type="GO" id="GO:0004068">
    <property type="term" value="F:aspartate 1-decarboxylase activity"/>
    <property type="evidence" value="ECO:0007669"/>
    <property type="project" value="UniProtKB-UniRule"/>
</dbReference>
<dbReference type="GO" id="GO:0006523">
    <property type="term" value="P:alanine biosynthetic process"/>
    <property type="evidence" value="ECO:0007669"/>
    <property type="project" value="InterPro"/>
</dbReference>
<dbReference type="GO" id="GO:0015940">
    <property type="term" value="P:pantothenate biosynthetic process"/>
    <property type="evidence" value="ECO:0007669"/>
    <property type="project" value="UniProtKB-UniRule"/>
</dbReference>
<dbReference type="CDD" id="cd06919">
    <property type="entry name" value="Asp_decarbox"/>
    <property type="match status" value="1"/>
</dbReference>
<dbReference type="Gene3D" id="2.40.40.20">
    <property type="match status" value="1"/>
</dbReference>
<dbReference type="HAMAP" id="MF_00446">
    <property type="entry name" value="PanD"/>
    <property type="match status" value="1"/>
</dbReference>
<dbReference type="InterPro" id="IPR009010">
    <property type="entry name" value="Asp_de-COase-like_dom_sf"/>
</dbReference>
<dbReference type="InterPro" id="IPR003190">
    <property type="entry name" value="Asp_decarbox"/>
</dbReference>
<dbReference type="NCBIfam" id="TIGR00223">
    <property type="entry name" value="panD"/>
    <property type="match status" value="1"/>
</dbReference>
<dbReference type="PANTHER" id="PTHR21012">
    <property type="entry name" value="ASPARTATE 1-DECARBOXYLASE"/>
    <property type="match status" value="1"/>
</dbReference>
<dbReference type="PANTHER" id="PTHR21012:SF0">
    <property type="entry name" value="ASPARTATE 1-DECARBOXYLASE"/>
    <property type="match status" value="1"/>
</dbReference>
<dbReference type="Pfam" id="PF02261">
    <property type="entry name" value="Asp_decarbox"/>
    <property type="match status" value="1"/>
</dbReference>
<dbReference type="PIRSF" id="PIRSF006246">
    <property type="entry name" value="Asp_decarbox"/>
    <property type="match status" value="1"/>
</dbReference>
<dbReference type="SUPFAM" id="SSF50692">
    <property type="entry name" value="ADC-like"/>
    <property type="match status" value="1"/>
</dbReference>
<proteinExistence type="inferred from homology"/>